<reference key="1">
    <citation type="journal article" date="1999" name="Nature">
        <title>Evidence for lateral gene transfer between Archaea and Bacteria from genome sequence of Thermotoga maritima.</title>
        <authorList>
            <person name="Nelson K.E."/>
            <person name="Clayton R.A."/>
            <person name="Gill S.R."/>
            <person name="Gwinn M.L."/>
            <person name="Dodson R.J."/>
            <person name="Haft D.H."/>
            <person name="Hickey E.K."/>
            <person name="Peterson J.D."/>
            <person name="Nelson W.C."/>
            <person name="Ketchum K.A."/>
            <person name="McDonald L.A."/>
            <person name="Utterback T.R."/>
            <person name="Malek J.A."/>
            <person name="Linher K.D."/>
            <person name="Garrett M.M."/>
            <person name="Stewart A.M."/>
            <person name="Cotton M.D."/>
            <person name="Pratt M.S."/>
            <person name="Phillips C.A."/>
            <person name="Richardson D.L."/>
            <person name="Heidelberg J.F."/>
            <person name="Sutton G.G."/>
            <person name="Fleischmann R.D."/>
            <person name="Eisen J.A."/>
            <person name="White O."/>
            <person name="Salzberg S.L."/>
            <person name="Smith H.O."/>
            <person name="Venter J.C."/>
            <person name="Fraser C.M."/>
        </authorList>
    </citation>
    <scope>NUCLEOTIDE SEQUENCE [LARGE SCALE GENOMIC DNA]</scope>
    <source>
        <strain>ATCC 43589 / DSM 3109 / JCM 10099 / NBRC 100826 / MSB8</strain>
    </source>
</reference>
<reference key="2">
    <citation type="journal article" date="2006" name="Cell">
        <title>A receptor-modifying deamidase in complex with a signaling phosphatase reveals reciprocal regulation.</title>
        <authorList>
            <person name="Chao X."/>
            <person name="Muff T.J."/>
            <person name="Park S.-Y."/>
            <person name="Zhang S."/>
            <person name="Pollard A.M."/>
            <person name="Ordal G.W."/>
            <person name="Bilwes A.M."/>
            <person name="Crane B.R."/>
        </authorList>
    </citation>
    <scope>X-RAY CRYSTALLOGRAPHY (2.5 ANGSTROMS) IN COMPLEX WITH CHEC</scope>
    <scope>MUTAGENESIS OF THR-21; SER-26; CYS-27 AND HIS-44</scope>
</reference>
<gene>
    <name type="primary">cheD</name>
    <name type="ordered locus">TM_0903</name>
</gene>
<accession>Q9X005</accession>
<feature type="chain" id="PRO_0000251072" description="Chemoreceptor glutamine deamidase CheD">
    <location>
        <begin position="1"/>
        <end position="157"/>
    </location>
</feature>
<feature type="active site" description="Nucleophile">
    <location>
        <position position="27"/>
    </location>
</feature>
<feature type="mutagenesis site" description="6-fold reduction in activity." evidence="1">
    <original>T</original>
    <variation>A</variation>
    <location>
        <position position="21"/>
    </location>
</feature>
<feature type="mutagenesis site" description="Loss of activity." evidence="1">
    <original>S</original>
    <variation>A</variation>
    <variation>H</variation>
    <location>
        <position position="26"/>
    </location>
</feature>
<feature type="mutagenesis site" description="Reduced activity." evidence="1">
    <original>S</original>
    <variation>N</variation>
    <location>
        <position position="26"/>
    </location>
</feature>
<feature type="mutagenesis site" description="Loss of activity. Does not prevent binding to mcp2." evidence="1">
    <original>C</original>
    <variation>A</variation>
    <location>
        <position position="27"/>
    </location>
</feature>
<feature type="mutagenesis site" description="Loss of activity." evidence="1">
    <original>C</original>
    <variation>H</variation>
    <variation>N</variation>
    <location>
        <position position="27"/>
    </location>
</feature>
<feature type="mutagenesis site" description="Loss of activity." evidence="1">
    <original>H</original>
    <variation>A</variation>
    <location>
        <position position="44"/>
    </location>
</feature>
<feature type="strand" evidence="3">
    <location>
        <begin position="2"/>
        <end position="4"/>
    </location>
</feature>
<feature type="strand" evidence="3">
    <location>
        <begin position="10"/>
        <end position="14"/>
    </location>
</feature>
<feature type="strand" evidence="3">
    <location>
        <begin position="18"/>
        <end position="26"/>
    </location>
</feature>
<feature type="strand" evidence="3">
    <location>
        <begin position="28"/>
        <end position="34"/>
    </location>
</feature>
<feature type="turn" evidence="3">
    <location>
        <begin position="35"/>
        <end position="38"/>
    </location>
</feature>
<feature type="strand" evidence="3">
    <location>
        <begin position="39"/>
        <end position="45"/>
    </location>
</feature>
<feature type="helix" evidence="3">
    <location>
        <begin position="57"/>
        <end position="59"/>
    </location>
</feature>
<feature type="helix" evidence="3">
    <location>
        <begin position="61"/>
        <end position="73"/>
    </location>
</feature>
<feature type="turn" evidence="3">
    <location>
        <begin position="74"/>
        <end position="76"/>
    </location>
</feature>
<feature type="helix" evidence="3">
    <location>
        <begin position="79"/>
        <end position="81"/>
    </location>
</feature>
<feature type="strand" evidence="3">
    <location>
        <begin position="83"/>
        <end position="88"/>
    </location>
</feature>
<feature type="helix" evidence="3">
    <location>
        <begin position="100"/>
        <end position="114"/>
    </location>
</feature>
<feature type="strand" evidence="3">
    <location>
        <begin position="119"/>
        <end position="124"/>
    </location>
</feature>
<feature type="strand" evidence="3">
    <location>
        <begin position="130"/>
        <end position="135"/>
    </location>
</feature>
<feature type="turn" evidence="3">
    <location>
        <begin position="136"/>
        <end position="139"/>
    </location>
</feature>
<feature type="strand" evidence="3">
    <location>
        <begin position="140"/>
        <end position="144"/>
    </location>
</feature>
<feature type="strand" evidence="3">
    <location>
        <begin position="154"/>
        <end position="157"/>
    </location>
</feature>
<name>CHED_THEMA</name>
<dbReference type="EC" id="3.5.1.44"/>
<dbReference type="EC" id="3.1.1.61"/>
<dbReference type="EMBL" id="AE000512">
    <property type="protein sequence ID" value="AAD35984.1"/>
    <property type="molecule type" value="Genomic_DNA"/>
</dbReference>
<dbReference type="PIR" id="F72318">
    <property type="entry name" value="F72318"/>
</dbReference>
<dbReference type="RefSeq" id="NP_228711.1">
    <property type="nucleotide sequence ID" value="NC_000853.1"/>
</dbReference>
<dbReference type="RefSeq" id="WP_004080666.1">
    <property type="nucleotide sequence ID" value="NZ_CP011107.1"/>
</dbReference>
<dbReference type="PDB" id="2F9Z">
    <property type="method" value="X-ray"/>
    <property type="resolution" value="2.40 A"/>
    <property type="chains" value="C/D=1-157"/>
</dbReference>
<dbReference type="PDBsum" id="2F9Z"/>
<dbReference type="SMR" id="Q9X005"/>
<dbReference type="FunCoup" id="Q9X005">
    <property type="interactions" value="42"/>
</dbReference>
<dbReference type="STRING" id="243274.TM_0903"/>
<dbReference type="PaxDb" id="243274-THEMA_00120"/>
<dbReference type="EnsemblBacteria" id="AAD35984">
    <property type="protein sequence ID" value="AAD35984"/>
    <property type="gene ID" value="TM_0903"/>
</dbReference>
<dbReference type="KEGG" id="tma:TM0903"/>
<dbReference type="KEGG" id="tmi:THEMA_00120"/>
<dbReference type="KEGG" id="tmm:Tmari_0905"/>
<dbReference type="KEGG" id="tmw:THMA_0925"/>
<dbReference type="eggNOG" id="COG1871">
    <property type="taxonomic scope" value="Bacteria"/>
</dbReference>
<dbReference type="InParanoid" id="Q9X005"/>
<dbReference type="OrthoDB" id="9807202at2"/>
<dbReference type="EvolutionaryTrace" id="Q9X005"/>
<dbReference type="Proteomes" id="UP000008183">
    <property type="component" value="Chromosome"/>
</dbReference>
<dbReference type="GO" id="GO:0008984">
    <property type="term" value="F:protein-glutamate methylesterase activity"/>
    <property type="evidence" value="ECO:0007669"/>
    <property type="project" value="UniProtKB-EC"/>
</dbReference>
<dbReference type="GO" id="GO:0050568">
    <property type="term" value="F:protein-glutamine glutaminase activity"/>
    <property type="evidence" value="ECO:0007669"/>
    <property type="project" value="UniProtKB-UniRule"/>
</dbReference>
<dbReference type="GO" id="GO:0006935">
    <property type="term" value="P:chemotaxis"/>
    <property type="evidence" value="ECO:0007669"/>
    <property type="project" value="UniProtKB-UniRule"/>
</dbReference>
<dbReference type="CDD" id="cd16352">
    <property type="entry name" value="CheD"/>
    <property type="match status" value="1"/>
</dbReference>
<dbReference type="Gene3D" id="3.30.1330.200">
    <property type="match status" value="1"/>
</dbReference>
<dbReference type="HAMAP" id="MF_01440">
    <property type="entry name" value="CheD"/>
    <property type="match status" value="1"/>
</dbReference>
<dbReference type="InterPro" id="IPR038592">
    <property type="entry name" value="CheD-like_sf"/>
</dbReference>
<dbReference type="InterPro" id="IPR054943">
    <property type="entry name" value="CheD_Thtga"/>
</dbReference>
<dbReference type="InterPro" id="IPR005659">
    <property type="entry name" value="Chemorcpt_Glu_NH3ase_CheD"/>
</dbReference>
<dbReference type="InterPro" id="IPR011324">
    <property type="entry name" value="Cytotoxic_necrot_fac-like_cat"/>
</dbReference>
<dbReference type="NCBIfam" id="NF041119">
    <property type="entry name" value="CheD_Thtga"/>
    <property type="match status" value="1"/>
</dbReference>
<dbReference type="NCBIfam" id="NF010018">
    <property type="entry name" value="PRK13495.1"/>
    <property type="match status" value="1"/>
</dbReference>
<dbReference type="PANTHER" id="PTHR35147">
    <property type="entry name" value="CHEMORECEPTOR GLUTAMINE DEAMIDASE CHED-RELATED"/>
    <property type="match status" value="1"/>
</dbReference>
<dbReference type="PANTHER" id="PTHR35147:SF1">
    <property type="entry name" value="CHEMORECEPTOR GLUTAMINE DEAMIDASE CHED-RELATED"/>
    <property type="match status" value="1"/>
</dbReference>
<dbReference type="Pfam" id="PF03975">
    <property type="entry name" value="CheD"/>
    <property type="match status" value="1"/>
</dbReference>
<dbReference type="SUPFAM" id="SSF64438">
    <property type="entry name" value="CNF1/YfiH-like putative cysteine hydrolases"/>
    <property type="match status" value="1"/>
</dbReference>
<comment type="function">
    <text>Deamidates glutamine residues on chemoreceptors (MCPs). CheD-mediated MCP deamidation is required for productive communication of the conformational signals of the chemoreceptors to the CheA kinase. In addition, demethylates methylated glutamate residues on chemoreceptors Mcp2 and Mcp4. Enhances the activity of CheC.</text>
</comment>
<comment type="catalytic activity">
    <reaction>
        <text>L-glutaminyl-[protein] + H2O = L-glutamyl-[protein] + NH4(+)</text>
        <dbReference type="Rhea" id="RHEA:16441"/>
        <dbReference type="Rhea" id="RHEA-COMP:10207"/>
        <dbReference type="Rhea" id="RHEA-COMP:10208"/>
        <dbReference type="ChEBI" id="CHEBI:15377"/>
        <dbReference type="ChEBI" id="CHEBI:28938"/>
        <dbReference type="ChEBI" id="CHEBI:29973"/>
        <dbReference type="ChEBI" id="CHEBI:30011"/>
        <dbReference type="EC" id="3.5.1.44"/>
    </reaction>
</comment>
<comment type="catalytic activity">
    <reaction>
        <text>[protein]-L-glutamate 5-O-methyl ester + H2O = L-glutamyl-[protein] + methanol + H(+)</text>
        <dbReference type="Rhea" id="RHEA:23236"/>
        <dbReference type="Rhea" id="RHEA-COMP:10208"/>
        <dbReference type="Rhea" id="RHEA-COMP:10311"/>
        <dbReference type="ChEBI" id="CHEBI:15377"/>
        <dbReference type="ChEBI" id="CHEBI:15378"/>
        <dbReference type="ChEBI" id="CHEBI:17790"/>
        <dbReference type="ChEBI" id="CHEBI:29973"/>
        <dbReference type="ChEBI" id="CHEBI:82795"/>
        <dbReference type="EC" id="3.1.1.61"/>
    </reaction>
</comment>
<comment type="subunit">
    <text evidence="1">Heterodimer with CheC. The CheC-CheD heterodimer interacts with phosphorylated CheY.</text>
</comment>
<comment type="similarity">
    <text evidence="2">Belongs to the CheD family.</text>
</comment>
<protein>
    <recommendedName>
        <fullName>Chemoreceptor glutamine deamidase CheD</fullName>
        <ecNumber>3.5.1.44</ecNumber>
    </recommendedName>
    <alternativeName>
        <fullName>Chemoreceptor glutamate methylesterase CheD</fullName>
        <ecNumber>3.1.1.61</ecNumber>
    </alternativeName>
</protein>
<organism>
    <name type="scientific">Thermotoga maritima (strain ATCC 43589 / DSM 3109 / JCM 10099 / NBRC 100826 / MSB8)</name>
    <dbReference type="NCBI Taxonomy" id="243274"/>
    <lineage>
        <taxon>Bacteria</taxon>
        <taxon>Thermotogati</taxon>
        <taxon>Thermotogota</taxon>
        <taxon>Thermotogae</taxon>
        <taxon>Thermotogales</taxon>
        <taxon>Thermotogaceae</taxon>
        <taxon>Thermotoga</taxon>
    </lineage>
</organism>
<keyword id="KW-0002">3D-structure</keyword>
<keyword id="KW-0145">Chemotaxis</keyword>
<keyword id="KW-0378">Hydrolase</keyword>
<keyword id="KW-1185">Reference proteome</keyword>
<proteinExistence type="evidence at protein level"/>
<sequence length="157" mass="16657">MKKVIGIGEYAVMKNPGVIVTLGLGSCVAVCMRDPVAKVGAMAHVMLPDSGGKTDKPGKYADTAVKTLVEELKKMGAKVERLEAKIAGGASMFESKGMNIGARNVEAVKKHLKDFGIKLLAEDTGGNRARSVEYNIETGKLLVRKVGGGEQLEIKEI</sequence>
<evidence type="ECO:0000269" key="1">
    <source>
    </source>
</evidence>
<evidence type="ECO:0000305" key="2"/>
<evidence type="ECO:0007829" key="3">
    <source>
        <dbReference type="PDB" id="2F9Z"/>
    </source>
</evidence>